<sequence length="253" mass="26438">MLKTRIIPCLDVADGRVVKGVNFVNLIDAGDPVEAAKAYDAAGADELCFLDIHATHENRGTMFDLVTRTAEQCFMPLTVGGGVRTQEDVRALLLAGADKVSFNSAAVANPDVVAEAADRFGSQCIVVAIDAKTVEPGRWEIFTHGGRKSTGIDAVEFARHVEAKGAGEILLTSMDRDGTKAGFNLPLTRAIADAVKIPVIASGGVGTLDHLVEGVTEGHASAVLAASIFHFGTYTIGEAKAHMAAAGIPMRLA</sequence>
<proteinExistence type="inferred from homology"/>
<comment type="function">
    <text evidence="1">IGPS catalyzes the conversion of PRFAR and glutamine to IGP, AICAR and glutamate. The HisF subunit catalyzes the cyclization activity that produces IGP and AICAR from PRFAR using the ammonia provided by the HisH subunit (By similarity).</text>
</comment>
<comment type="catalytic activity">
    <reaction>
        <text>5-[(5-phospho-1-deoxy-D-ribulos-1-ylimino)methylamino]-1-(5-phospho-beta-D-ribosyl)imidazole-4-carboxamide + L-glutamine = D-erythro-1-(imidazol-4-yl)glycerol 3-phosphate + 5-amino-1-(5-phospho-beta-D-ribosyl)imidazole-4-carboxamide + L-glutamate + H(+)</text>
        <dbReference type="Rhea" id="RHEA:24793"/>
        <dbReference type="ChEBI" id="CHEBI:15378"/>
        <dbReference type="ChEBI" id="CHEBI:29985"/>
        <dbReference type="ChEBI" id="CHEBI:58278"/>
        <dbReference type="ChEBI" id="CHEBI:58359"/>
        <dbReference type="ChEBI" id="CHEBI:58475"/>
        <dbReference type="ChEBI" id="CHEBI:58525"/>
        <dbReference type="EC" id="4.3.2.10"/>
    </reaction>
</comment>
<comment type="pathway">
    <text>Amino-acid biosynthesis; L-histidine biosynthesis; L-histidine from 5-phospho-alpha-D-ribose 1-diphosphate: step 5/9.</text>
</comment>
<comment type="subunit">
    <text evidence="1">Heterodimer of HisH and HisF.</text>
</comment>
<comment type="subcellular location">
    <subcellularLocation>
        <location evidence="1">Cytoplasm</location>
    </subcellularLocation>
</comment>
<comment type="similarity">
    <text evidence="3">Belongs to the HisA/HisF family.</text>
</comment>
<name>HIS6_RHOCB</name>
<protein>
    <recommendedName>
        <fullName>Imidazole glycerol phosphate synthase subunit HisF</fullName>
        <ecNumber>4.3.2.10</ecNumber>
    </recommendedName>
    <alternativeName>
        <fullName>IGP synthase cyclase subunit</fullName>
    </alternativeName>
    <alternativeName>
        <fullName>IGP synthase subunit HisF</fullName>
    </alternativeName>
    <alternativeName>
        <fullName>ImGP synthase subunit HisF</fullName>
        <shortName>IGPS subunit HisF</shortName>
    </alternativeName>
</protein>
<evidence type="ECO:0000250" key="1"/>
<evidence type="ECO:0000255" key="2"/>
<evidence type="ECO:0000305" key="3"/>
<gene>
    <name type="primary">hisF</name>
    <name type="ordered locus">RCAP_rcc01153</name>
</gene>
<accession>O30724</accession>
<accession>D5ARP0</accession>
<keyword id="KW-0028">Amino-acid biosynthesis</keyword>
<keyword id="KW-0963">Cytoplasm</keyword>
<keyword id="KW-0368">Histidine biosynthesis</keyword>
<keyword id="KW-0456">Lyase</keyword>
<keyword id="KW-1185">Reference proteome</keyword>
<reference key="1">
    <citation type="journal article" date="1998" name="J. Bacteriol.">
        <title>Isolation and characterization of Rhodobacter capsulatus mutants affected in cytochrome cbb3 oxidase activity.</title>
        <authorList>
            <person name="Koch H.G."/>
            <person name="Hwang O."/>
            <person name="Daldal F."/>
        </authorList>
    </citation>
    <scope>NUCLEOTIDE SEQUENCE [GENOMIC DNA]</scope>
    <source>
        <strain>MT1131</strain>
    </source>
</reference>
<reference key="2">
    <citation type="journal article" date="2010" name="J. Bacteriol.">
        <title>Complete genome sequence of the photosynthetic purple nonsulfur bacterium Rhodobacter capsulatus SB 1003.</title>
        <authorList>
            <person name="Strnad H."/>
            <person name="Lapidus A."/>
            <person name="Paces J."/>
            <person name="Ulbrich P."/>
            <person name="Vlcek C."/>
            <person name="Paces V."/>
            <person name="Haselkorn R."/>
        </authorList>
    </citation>
    <scope>NUCLEOTIDE SEQUENCE [LARGE SCALE GENOMIC DNA]</scope>
    <source>
        <strain>ATCC BAA-309 / NBRC 16581 / SB1003</strain>
    </source>
</reference>
<feature type="chain" id="PRO_0000142218" description="Imidazole glycerol phosphate synthase subunit HisF">
    <location>
        <begin position="1"/>
        <end position="253"/>
    </location>
</feature>
<feature type="active site" evidence="2">
    <location>
        <position position="11"/>
    </location>
</feature>
<feature type="active site" evidence="2">
    <location>
        <position position="130"/>
    </location>
</feature>
<feature type="sequence conflict" description="In Ref. 1; AAC46105." evidence="3" ref="1">
    <original>AEAADRFG</original>
    <variation>RSRRSLR</variation>
    <location>
        <begin position="114"/>
        <end position="121"/>
    </location>
</feature>
<feature type="sequence conflict" description="In Ref. 1; AAC46105." evidence="3" ref="1">
    <original>A</original>
    <variation>P</variation>
    <location>
        <position position="245"/>
    </location>
</feature>
<dbReference type="EC" id="4.3.2.10"/>
<dbReference type="EMBL" id="AF016223">
    <property type="protein sequence ID" value="AAC46105.1"/>
    <property type="molecule type" value="Genomic_DNA"/>
</dbReference>
<dbReference type="EMBL" id="CP001312">
    <property type="protein sequence ID" value="ADE84911.1"/>
    <property type="molecule type" value="Genomic_DNA"/>
</dbReference>
<dbReference type="RefSeq" id="WP_013066890.1">
    <property type="nucleotide sequence ID" value="NC_014034.1"/>
</dbReference>
<dbReference type="SMR" id="O30724"/>
<dbReference type="STRING" id="272942.RCAP_rcc01153"/>
<dbReference type="GeneID" id="31490066"/>
<dbReference type="KEGG" id="rcp:RCAP_rcc01153"/>
<dbReference type="eggNOG" id="COG0107">
    <property type="taxonomic scope" value="Bacteria"/>
</dbReference>
<dbReference type="HOGENOM" id="CLU_048577_4_0_5"/>
<dbReference type="OrthoDB" id="9781903at2"/>
<dbReference type="UniPathway" id="UPA00031">
    <property type="reaction ID" value="UER00010"/>
</dbReference>
<dbReference type="Proteomes" id="UP000002361">
    <property type="component" value="Chromosome"/>
</dbReference>
<dbReference type="GO" id="GO:0005737">
    <property type="term" value="C:cytoplasm"/>
    <property type="evidence" value="ECO:0007669"/>
    <property type="project" value="UniProtKB-SubCell"/>
</dbReference>
<dbReference type="GO" id="GO:0000107">
    <property type="term" value="F:imidazoleglycerol-phosphate synthase activity"/>
    <property type="evidence" value="ECO:0007669"/>
    <property type="project" value="UniProtKB-UniRule"/>
</dbReference>
<dbReference type="GO" id="GO:0016829">
    <property type="term" value="F:lyase activity"/>
    <property type="evidence" value="ECO:0007669"/>
    <property type="project" value="UniProtKB-KW"/>
</dbReference>
<dbReference type="GO" id="GO:0000105">
    <property type="term" value="P:L-histidine biosynthetic process"/>
    <property type="evidence" value="ECO:0007669"/>
    <property type="project" value="UniProtKB-UniRule"/>
</dbReference>
<dbReference type="CDD" id="cd04731">
    <property type="entry name" value="HisF"/>
    <property type="match status" value="1"/>
</dbReference>
<dbReference type="FunFam" id="3.20.20.70:FF:000006">
    <property type="entry name" value="Imidazole glycerol phosphate synthase subunit HisF"/>
    <property type="match status" value="1"/>
</dbReference>
<dbReference type="Gene3D" id="3.20.20.70">
    <property type="entry name" value="Aldolase class I"/>
    <property type="match status" value="1"/>
</dbReference>
<dbReference type="HAMAP" id="MF_01013">
    <property type="entry name" value="HisF"/>
    <property type="match status" value="1"/>
</dbReference>
<dbReference type="InterPro" id="IPR013785">
    <property type="entry name" value="Aldolase_TIM"/>
</dbReference>
<dbReference type="InterPro" id="IPR006062">
    <property type="entry name" value="His_biosynth"/>
</dbReference>
<dbReference type="InterPro" id="IPR004651">
    <property type="entry name" value="HisF"/>
</dbReference>
<dbReference type="InterPro" id="IPR050064">
    <property type="entry name" value="IGPS_HisA/HisF"/>
</dbReference>
<dbReference type="InterPro" id="IPR011060">
    <property type="entry name" value="RibuloseP-bd_barrel"/>
</dbReference>
<dbReference type="NCBIfam" id="TIGR00735">
    <property type="entry name" value="hisF"/>
    <property type="match status" value="1"/>
</dbReference>
<dbReference type="PANTHER" id="PTHR21235:SF2">
    <property type="entry name" value="IMIDAZOLE GLYCEROL PHOSPHATE SYNTHASE HISHF"/>
    <property type="match status" value="1"/>
</dbReference>
<dbReference type="PANTHER" id="PTHR21235">
    <property type="entry name" value="IMIDAZOLE GLYCEROL PHOSPHATE SYNTHASE SUBUNIT HISF/H IGP SYNTHASE SUBUNIT HISF/H"/>
    <property type="match status" value="1"/>
</dbReference>
<dbReference type="Pfam" id="PF00977">
    <property type="entry name" value="His_biosynth"/>
    <property type="match status" value="1"/>
</dbReference>
<dbReference type="SUPFAM" id="SSF51366">
    <property type="entry name" value="Ribulose-phoshate binding barrel"/>
    <property type="match status" value="1"/>
</dbReference>
<organism>
    <name type="scientific">Rhodobacter capsulatus (strain ATCC BAA-309 / NBRC 16581 / SB1003)</name>
    <dbReference type="NCBI Taxonomy" id="272942"/>
    <lineage>
        <taxon>Bacteria</taxon>
        <taxon>Pseudomonadati</taxon>
        <taxon>Pseudomonadota</taxon>
        <taxon>Alphaproteobacteria</taxon>
        <taxon>Rhodobacterales</taxon>
        <taxon>Rhodobacter group</taxon>
        <taxon>Rhodobacter</taxon>
    </lineage>
</organism>